<organism>
    <name type="scientific">Alcaligenes faecalis</name>
    <dbReference type="NCBI Taxonomy" id="511"/>
    <lineage>
        <taxon>Bacteria</taxon>
        <taxon>Pseudomonadati</taxon>
        <taxon>Pseudomonadota</taxon>
        <taxon>Betaproteobacteria</taxon>
        <taxon>Burkholderiales</taxon>
        <taxon>Alcaligenaceae</taxon>
        <taxon>Alcaligenes</taxon>
    </lineage>
</organism>
<name>AIOB_ALCFA</name>
<proteinExistence type="evidence at protein level"/>
<keyword id="KW-0001">2Fe-2S</keyword>
<keyword id="KW-0002">3D-structure</keyword>
<keyword id="KW-0903">Direct protein sequencing</keyword>
<keyword id="KW-1015">Disulfide bond</keyword>
<keyword id="KW-0408">Iron</keyword>
<keyword id="KW-0411">Iron-sulfur</keyword>
<keyword id="KW-0479">Metal-binding</keyword>
<keyword id="KW-0560">Oxidoreductase</keyword>
<keyword id="KW-0732">Signal</keyword>
<evidence type="ECO:0000255" key="1">
    <source>
        <dbReference type="PROSITE-ProRule" id="PRU00628"/>
    </source>
</evidence>
<evidence type="ECO:0000255" key="2">
    <source>
        <dbReference type="PROSITE-ProRule" id="PRU00648"/>
    </source>
</evidence>
<evidence type="ECO:0000305" key="3"/>
<evidence type="ECO:0007829" key="4">
    <source>
        <dbReference type="PDB" id="8CH9"/>
    </source>
</evidence>
<comment type="function">
    <text>Involved in the detoxification of arsenic. Oxidizes As(III)O3(3-) (arsenite) to the somewhat less toxic As(V)O4(3-) (arsenate).</text>
</comment>
<comment type="catalytic activity">
    <reaction>
        <text>2 oxidized [azurin] + arsenite + H2O = 2 reduced [azurin] + arsenate + 3 H(+)</text>
        <dbReference type="Rhea" id="RHEA:18701"/>
        <dbReference type="Rhea" id="RHEA-COMP:11034"/>
        <dbReference type="Rhea" id="RHEA-COMP:11035"/>
        <dbReference type="ChEBI" id="CHEBI:15377"/>
        <dbReference type="ChEBI" id="CHEBI:15378"/>
        <dbReference type="ChEBI" id="CHEBI:29036"/>
        <dbReference type="ChEBI" id="CHEBI:29242"/>
        <dbReference type="ChEBI" id="CHEBI:48597"/>
        <dbReference type="ChEBI" id="CHEBI:49552"/>
        <dbReference type="EC" id="1.20.9.1"/>
    </reaction>
</comment>
<comment type="cofactor">
    <cofactor>
        <name>[2Fe-2S] cluster</name>
        <dbReference type="ChEBI" id="CHEBI:190135"/>
    </cofactor>
    <text>Binds 1 [2Fe-2S] cluster per subunit.</text>
</comment>
<comment type="subunit">
    <text>Heterodimer consisting of a large and a small subunit.</text>
</comment>
<comment type="PTM">
    <text>Predicted to be exported by the Tat system. The position of the signal peptide cleavage has not been experimentally proven.</text>
</comment>
<comment type="similarity">
    <text evidence="3">Belongs to the AOX family.</text>
</comment>
<sequence>MSDTINLTRRGFLKVSGSGVAVAATLSPIASANAQKAPADAGRTTLQYPATQVSVAKNLKANEPVSFTYPDTSSPCVAVKLGSPVPGGVGPNNDIVAYSVLCTHMGCPTSYDKSSKTFKCPCHFTEFDAEKAGQMICGQATENLPRVLLRYDEASDALTAVGVDGLIYGRQANVI</sequence>
<reference key="1">
    <citation type="submission" date="2003-04" db="EMBL/GenBank/DDBJ databases">
        <title>Genes for arsenite oxidation from Alcaligenes faecalis.</title>
        <authorList>
            <person name="Silver S."/>
            <person name="Phung L.T."/>
            <person name="Malo B.J."/>
        </authorList>
    </citation>
    <scope>NUCLEOTIDE SEQUENCE [GENOMIC DNA]</scope>
    <source>
        <strain>CCUG 2071 / LMG 3368 / NCIMB 8687</strain>
    </source>
</reference>
<reference key="2">
    <citation type="journal article" date="2001" name="Structure">
        <title>Crystal structure of the 100 kDa arsenite oxidase from Alcaligenes faecalis in two crystal forms at 1.64 A and 2.03 A.</title>
        <authorList>
            <person name="Ellis P.J."/>
            <person name="Conrads T."/>
            <person name="Hille R."/>
            <person name="Kuhn P."/>
        </authorList>
    </citation>
    <scope>X-RAY CRYSTALLOGRAPHY (1.64 ANGSTROMS)</scope>
    <scope>PROTEIN SEQUENCE OF 43-175</scope>
    <source>
        <strain>CCUG 2071 / LMG 3368 / NCIMB 8687</strain>
    </source>
</reference>
<reference key="3">
    <citation type="journal article" date="1992" name="J. Biol. Chem.">
        <title>The purification and characterization of arsenite oxidase from Alcaligenes faecalis, a molybdenum-containing hydroxylase.</title>
        <authorList>
            <person name="Anderson G.L."/>
            <person name="Williams J."/>
            <person name="Hille R."/>
        </authorList>
    </citation>
    <scope>PROTEIN SEQUENCE OF 44-61</scope>
    <source>
        <strain>CCUG 2071 / LMG 3368 / NCIMB 8687</strain>
    </source>
</reference>
<reference key="4">
    <citation type="journal article" date="2012" name="J. Bacteriol.">
        <title>Unified nomenclature for genes involved in prokaryotic aerobic arsenite oxidation.</title>
        <authorList>
            <person name="Lett M.C."/>
            <person name="Muller D."/>
            <person name="Lievremont D."/>
            <person name="Silver S."/>
            <person name="Santini J."/>
        </authorList>
    </citation>
    <scope>NOMENCLATURE</scope>
</reference>
<gene>
    <name type="primary">aioB</name>
    <name type="synonym">aoxA</name>
    <name type="synonym">asoB</name>
</gene>
<protein>
    <recommendedName>
        <fullName>Arsenite oxidase subunit AioB</fullName>
        <shortName>AOII</shortName>
        <ecNumber>1.20.9.1</ecNumber>
    </recommendedName>
    <alternativeName>
        <fullName>Arsenite oxidase Rieske subunit</fullName>
    </alternativeName>
</protein>
<dbReference type="EC" id="1.20.9.1"/>
<dbReference type="EMBL" id="AY297781">
    <property type="protein sequence ID" value="AAQ19839.1"/>
    <property type="molecule type" value="Genomic_DNA"/>
</dbReference>
<dbReference type="PIR" id="A45138">
    <property type="entry name" value="A45138"/>
</dbReference>
<dbReference type="PDB" id="1G8J">
    <property type="method" value="X-ray"/>
    <property type="resolution" value="2.03 A"/>
    <property type="chains" value="B/D=43-175"/>
</dbReference>
<dbReference type="PDB" id="1G8K">
    <property type="method" value="X-ray"/>
    <property type="resolution" value="1.64 A"/>
    <property type="chains" value="B/D/F/H=43-175"/>
</dbReference>
<dbReference type="PDB" id="8CFF">
    <property type="method" value="X-ray"/>
    <property type="resolution" value="1.57 A"/>
    <property type="chains" value="B/D/F/H=43-175"/>
</dbReference>
<dbReference type="PDB" id="8CGS">
    <property type="method" value="X-ray"/>
    <property type="resolution" value="1.84 A"/>
    <property type="chains" value="B/D/F/H=43-175"/>
</dbReference>
<dbReference type="PDB" id="8CH9">
    <property type="method" value="X-ray"/>
    <property type="resolution" value="1.43 A"/>
    <property type="chains" value="B/D/F/H=43-175"/>
</dbReference>
<dbReference type="PDBsum" id="1G8J"/>
<dbReference type="PDBsum" id="1G8K"/>
<dbReference type="PDBsum" id="8CFF"/>
<dbReference type="PDBsum" id="8CGS"/>
<dbReference type="PDBsum" id="8CH9"/>
<dbReference type="SMR" id="Q7SIF3"/>
<dbReference type="TCDB" id="5.A.3.6.1">
    <property type="family name" value="the prokaryotic molybdopterin-containing oxidoreductase (pmo) family"/>
</dbReference>
<dbReference type="KEGG" id="ag:AAQ19839"/>
<dbReference type="BioCyc" id="MetaCyc:MONOMER-10728"/>
<dbReference type="BRENDA" id="1.20.9.1">
    <property type="organism ID" value="232"/>
</dbReference>
<dbReference type="EvolutionaryTrace" id="Q7SIF3"/>
<dbReference type="GO" id="GO:0016020">
    <property type="term" value="C:membrane"/>
    <property type="evidence" value="ECO:0007669"/>
    <property type="project" value="InterPro"/>
</dbReference>
<dbReference type="GO" id="GO:0051537">
    <property type="term" value="F:2 iron, 2 sulfur cluster binding"/>
    <property type="evidence" value="ECO:0007669"/>
    <property type="project" value="UniProtKB-KW"/>
</dbReference>
<dbReference type="GO" id="GO:0050611">
    <property type="term" value="F:arsenate reductase (azurin) activity"/>
    <property type="evidence" value="ECO:0007669"/>
    <property type="project" value="UniProtKB-EC"/>
</dbReference>
<dbReference type="GO" id="GO:0046872">
    <property type="term" value="F:metal ion binding"/>
    <property type="evidence" value="ECO:0007669"/>
    <property type="project" value="UniProtKB-KW"/>
</dbReference>
<dbReference type="CDD" id="cd03476">
    <property type="entry name" value="Rieske_ArOX_small"/>
    <property type="match status" value="1"/>
</dbReference>
<dbReference type="Gene3D" id="2.102.10.10">
    <property type="entry name" value="Rieske [2Fe-2S] iron-sulphur domain"/>
    <property type="match status" value="1"/>
</dbReference>
<dbReference type="InterPro" id="IPR014067">
    <property type="entry name" value="AioB/IdrB_ssu"/>
</dbReference>
<dbReference type="InterPro" id="IPR017941">
    <property type="entry name" value="Rieske_2Fe-2S"/>
</dbReference>
<dbReference type="InterPro" id="IPR036922">
    <property type="entry name" value="Rieske_2Fe-2S_sf"/>
</dbReference>
<dbReference type="InterPro" id="IPR014349">
    <property type="entry name" value="Rieske_Fe-S_prot"/>
</dbReference>
<dbReference type="InterPro" id="IPR005805">
    <property type="entry name" value="Rieske_Fe-S_prot_C"/>
</dbReference>
<dbReference type="InterPro" id="IPR006311">
    <property type="entry name" value="TAT_signal"/>
</dbReference>
<dbReference type="InterPro" id="IPR019546">
    <property type="entry name" value="TAT_signal_bac_arc"/>
</dbReference>
<dbReference type="NCBIfam" id="TIGR02694">
    <property type="entry name" value="arsenite_ox_S"/>
    <property type="match status" value="1"/>
</dbReference>
<dbReference type="NCBIfam" id="TIGR01409">
    <property type="entry name" value="TAT_signal_seq"/>
    <property type="match status" value="1"/>
</dbReference>
<dbReference type="PANTHER" id="PTHR10134">
    <property type="entry name" value="CYTOCHROME B-C1 COMPLEX SUBUNIT RIESKE, MITOCHONDRIAL"/>
    <property type="match status" value="1"/>
</dbReference>
<dbReference type="Pfam" id="PF00355">
    <property type="entry name" value="Rieske"/>
    <property type="match status" value="1"/>
</dbReference>
<dbReference type="PRINTS" id="PR00162">
    <property type="entry name" value="RIESKE"/>
</dbReference>
<dbReference type="SUPFAM" id="SSF50022">
    <property type="entry name" value="ISP domain"/>
    <property type="match status" value="1"/>
</dbReference>
<dbReference type="PROSITE" id="PS51296">
    <property type="entry name" value="RIESKE"/>
    <property type="match status" value="1"/>
</dbReference>
<dbReference type="PROSITE" id="PS51318">
    <property type="entry name" value="TAT"/>
    <property type="match status" value="1"/>
</dbReference>
<feature type="signal peptide" description="Tat-type signal" evidence="2">
    <location>
        <begin position="1"/>
        <end position="32"/>
    </location>
</feature>
<feature type="chain" id="PRO_0000127798" description="Arsenite oxidase subunit AioB">
    <location>
        <begin position="33"/>
        <end position="175"/>
    </location>
</feature>
<feature type="domain" description="Rieske" evidence="1">
    <location>
        <begin position="62"/>
        <end position="158"/>
    </location>
</feature>
<feature type="binding site">
    <location>
        <position position="102"/>
    </location>
    <ligand>
        <name>[2Fe-2S] cluster</name>
        <dbReference type="ChEBI" id="CHEBI:190135"/>
    </ligand>
</feature>
<feature type="binding site">
    <location>
        <position position="104"/>
    </location>
    <ligand>
        <name>[2Fe-2S] cluster</name>
        <dbReference type="ChEBI" id="CHEBI:190135"/>
    </ligand>
</feature>
<feature type="binding site">
    <location>
        <position position="120"/>
    </location>
    <ligand>
        <name>[2Fe-2S] cluster</name>
        <dbReference type="ChEBI" id="CHEBI:190135"/>
    </ligand>
</feature>
<feature type="binding site">
    <location>
        <position position="123"/>
    </location>
    <ligand>
        <name>[2Fe-2S] cluster</name>
        <dbReference type="ChEBI" id="CHEBI:190135"/>
    </ligand>
</feature>
<feature type="disulfide bond">
    <location>
        <begin position="107"/>
        <end position="122"/>
    </location>
</feature>
<feature type="sequence conflict" description="In Ref. 3; AA sequence." evidence="3" ref="3">
    <original>T</original>
    <variation>R</variation>
    <location>
        <position position="45"/>
    </location>
</feature>
<feature type="sequence conflict" description="In Ref. 2; AA sequence." evidence="3" ref="2">
    <original>Q</original>
    <variation>A</variation>
    <location>
        <position position="47"/>
    </location>
</feature>
<feature type="sequence conflict" description="In Ref. 3; AA sequence." evidence="3" ref="3">
    <original>T</original>
    <variation>C</variation>
    <location>
        <position position="51"/>
    </location>
</feature>
<feature type="sequence conflict" description="In Ref. 2; AA sequence." evidence="3" ref="2">
    <original>Q</original>
    <variation>A</variation>
    <location>
        <position position="52"/>
    </location>
</feature>
<feature type="sequence conflict" description="In Ref. 3; AA sequence." evidence="3" ref="3">
    <original>A</original>
    <variation>V</variation>
    <location>
        <position position="56"/>
    </location>
</feature>
<feature type="sequence conflict" description="In Ref. 2; AA sequence." evidence="3" ref="2">
    <original>K</original>
    <variation>A</variation>
    <location>
        <position position="60"/>
    </location>
</feature>
<feature type="sequence conflict" description="In Ref. 2; AA sequence." evidence="3" ref="2">
    <original>V</original>
    <variation>S</variation>
    <location>
        <position position="65"/>
    </location>
</feature>
<feature type="sequence conflict" description="In Ref. 2; AA sequence." evidence="3" ref="2">
    <original>S</original>
    <variation>A</variation>
    <location>
        <position position="83"/>
    </location>
</feature>
<feature type="sequence conflict" description="In Ref. 2; AA sequence." evidence="3" ref="2">
    <original>NN</original>
    <variation>DD</variation>
    <location>
        <begin position="92"/>
        <end position="93"/>
    </location>
</feature>
<feature type="sequence conflict" description="In Ref. 2; AA sequence." evidence="3" ref="2">
    <original>K</original>
    <variation>S</variation>
    <location>
        <position position="113"/>
    </location>
</feature>
<feature type="sequence conflict" description="In Ref. 2; AA sequence." evidence="3" ref="2">
    <original>K</original>
    <variation>S</variation>
    <location>
        <position position="119"/>
    </location>
</feature>
<feature type="sequence conflict" description="In Ref. 2; AA sequence." evidence="3" ref="2">
    <original>Q</original>
    <variation>E</variation>
    <location>
        <position position="139"/>
    </location>
</feature>
<feature type="sequence conflict" description="In Ref. 2; AA sequence." evidence="3" ref="2">
    <original>EN</original>
    <variation>AD</variation>
    <location>
        <begin position="142"/>
        <end position="143"/>
    </location>
</feature>
<feature type="sequence conflict" description="In Ref. 2; AA sequence." evidence="3" ref="2">
    <original>E</original>
    <variation>A</variation>
    <location>
        <position position="153"/>
    </location>
</feature>
<feature type="strand" evidence="4">
    <location>
        <begin position="51"/>
        <end position="55"/>
    </location>
</feature>
<feature type="helix" evidence="4">
    <location>
        <begin position="56"/>
        <end position="58"/>
    </location>
</feature>
<feature type="strand" evidence="4">
    <location>
        <begin position="65"/>
        <end position="68"/>
    </location>
</feature>
<feature type="strand" evidence="4">
    <location>
        <begin position="74"/>
        <end position="80"/>
    </location>
</feature>
<feature type="turn" evidence="4">
    <location>
        <begin position="90"/>
        <end position="93"/>
    </location>
</feature>
<feature type="strand" evidence="4">
    <location>
        <begin position="95"/>
        <end position="99"/>
    </location>
</feature>
<feature type="turn" evidence="4">
    <location>
        <begin position="103"/>
        <end position="105"/>
    </location>
</feature>
<feature type="strand" evidence="4">
    <location>
        <begin position="110"/>
        <end position="112"/>
    </location>
</feature>
<feature type="turn" evidence="4">
    <location>
        <begin position="113"/>
        <end position="116"/>
    </location>
</feature>
<feature type="strand" evidence="4">
    <location>
        <begin position="117"/>
        <end position="119"/>
    </location>
</feature>
<feature type="turn" evidence="4">
    <location>
        <begin position="121"/>
        <end position="123"/>
    </location>
</feature>
<feature type="strand" evidence="4">
    <location>
        <begin position="126"/>
        <end position="128"/>
    </location>
</feature>
<feature type="helix" evidence="4">
    <location>
        <begin position="129"/>
        <end position="131"/>
    </location>
</feature>
<feature type="strand" evidence="4">
    <location>
        <begin position="135"/>
        <end position="139"/>
    </location>
</feature>
<feature type="strand" evidence="4">
    <location>
        <begin position="146"/>
        <end position="151"/>
    </location>
</feature>
<feature type="turn" evidence="4">
    <location>
        <begin position="153"/>
        <end position="155"/>
    </location>
</feature>
<feature type="strand" evidence="4">
    <location>
        <begin position="157"/>
        <end position="165"/>
    </location>
</feature>
<feature type="strand" evidence="4">
    <location>
        <begin position="171"/>
        <end position="173"/>
    </location>
</feature>
<accession>Q7SIF3</accession>
<accession>Q6WB59</accession>
<accession>Q9R5G0</accession>